<gene>
    <name type="primary">dnaK</name>
    <name type="ordered locus">Atu0122</name>
    <name type="ORF">AGR_C_195</name>
</gene>
<protein>
    <recommendedName>
        <fullName>Chaperone protein DnaK</fullName>
    </recommendedName>
    <alternativeName>
        <fullName>HSP70</fullName>
    </alternativeName>
    <alternativeName>
        <fullName>Heat shock 70 kDa protein</fullName>
    </alternativeName>
    <alternativeName>
        <fullName>Heat shock protein 70</fullName>
    </alternativeName>
</protein>
<accession>P50019</accession>
<name>DNAK_AGRFC</name>
<dbReference type="EMBL" id="X87113">
    <property type="protein sequence ID" value="CAA60592.1"/>
    <property type="molecule type" value="Genomic_DNA"/>
</dbReference>
<dbReference type="EMBL" id="AE007869">
    <property type="protein sequence ID" value="AAK85942.1"/>
    <property type="molecule type" value="Genomic_DNA"/>
</dbReference>
<dbReference type="PIR" id="AE2591">
    <property type="entry name" value="AE2591"/>
</dbReference>
<dbReference type="PIR" id="E97373">
    <property type="entry name" value="E97373"/>
</dbReference>
<dbReference type="PIR" id="I39585">
    <property type="entry name" value="I39585"/>
</dbReference>
<dbReference type="RefSeq" id="NP_353157.1">
    <property type="nucleotide sequence ID" value="NC_003062.2"/>
</dbReference>
<dbReference type="RefSeq" id="WP_006309946.1">
    <property type="nucleotide sequence ID" value="NC_003062.2"/>
</dbReference>
<dbReference type="SMR" id="P50019"/>
<dbReference type="STRING" id="176299.Atu0122"/>
<dbReference type="EnsemblBacteria" id="AAK85942">
    <property type="protein sequence ID" value="AAK85942"/>
    <property type="gene ID" value="Atu0122"/>
</dbReference>
<dbReference type="GeneID" id="1132160"/>
<dbReference type="KEGG" id="atu:Atu0122"/>
<dbReference type="PATRIC" id="fig|176299.10.peg.114"/>
<dbReference type="eggNOG" id="COG0443">
    <property type="taxonomic scope" value="Bacteria"/>
</dbReference>
<dbReference type="HOGENOM" id="CLU_005965_2_1_5"/>
<dbReference type="OrthoDB" id="9766019at2"/>
<dbReference type="PhylomeDB" id="P50019"/>
<dbReference type="BioCyc" id="AGRO:ATU0122-MONOMER"/>
<dbReference type="Proteomes" id="UP000000813">
    <property type="component" value="Chromosome circular"/>
</dbReference>
<dbReference type="GO" id="GO:0005524">
    <property type="term" value="F:ATP binding"/>
    <property type="evidence" value="ECO:0007669"/>
    <property type="project" value="UniProtKB-UniRule"/>
</dbReference>
<dbReference type="GO" id="GO:0140662">
    <property type="term" value="F:ATP-dependent protein folding chaperone"/>
    <property type="evidence" value="ECO:0007669"/>
    <property type="project" value="InterPro"/>
</dbReference>
<dbReference type="GO" id="GO:0051082">
    <property type="term" value="F:unfolded protein binding"/>
    <property type="evidence" value="ECO:0007669"/>
    <property type="project" value="InterPro"/>
</dbReference>
<dbReference type="CDD" id="cd11733">
    <property type="entry name" value="ASKHA_NBD_HSP70_HSPA9"/>
    <property type="match status" value="1"/>
</dbReference>
<dbReference type="FunFam" id="2.60.34.10:FF:000014">
    <property type="entry name" value="Chaperone protein DnaK HSP70"/>
    <property type="match status" value="1"/>
</dbReference>
<dbReference type="FunFam" id="3.30.420.40:FF:000020">
    <property type="entry name" value="Chaperone protein HscA homolog"/>
    <property type="match status" value="1"/>
</dbReference>
<dbReference type="FunFam" id="3.30.30.30:FF:000003">
    <property type="entry name" value="Heat shock protein 9"/>
    <property type="match status" value="1"/>
</dbReference>
<dbReference type="FunFam" id="1.20.1270.10:FF:000001">
    <property type="entry name" value="Molecular chaperone DnaK"/>
    <property type="match status" value="1"/>
</dbReference>
<dbReference type="FunFam" id="3.30.420.40:FF:000004">
    <property type="entry name" value="Molecular chaperone DnaK"/>
    <property type="match status" value="1"/>
</dbReference>
<dbReference type="FunFam" id="3.90.640.10:FF:000003">
    <property type="entry name" value="Molecular chaperone DnaK"/>
    <property type="match status" value="1"/>
</dbReference>
<dbReference type="Gene3D" id="1.20.1270.10">
    <property type="match status" value="1"/>
</dbReference>
<dbReference type="Gene3D" id="3.30.420.40">
    <property type="match status" value="2"/>
</dbReference>
<dbReference type="Gene3D" id="3.90.640.10">
    <property type="entry name" value="Actin, Chain A, domain 4"/>
    <property type="match status" value="1"/>
</dbReference>
<dbReference type="Gene3D" id="2.60.34.10">
    <property type="entry name" value="Substrate Binding Domain Of DNAk, Chain A, domain 1"/>
    <property type="match status" value="1"/>
</dbReference>
<dbReference type="HAMAP" id="MF_00332">
    <property type="entry name" value="DnaK"/>
    <property type="match status" value="1"/>
</dbReference>
<dbReference type="InterPro" id="IPR043129">
    <property type="entry name" value="ATPase_NBD"/>
</dbReference>
<dbReference type="InterPro" id="IPR012725">
    <property type="entry name" value="Chaperone_DnaK"/>
</dbReference>
<dbReference type="InterPro" id="IPR018181">
    <property type="entry name" value="Heat_shock_70_CS"/>
</dbReference>
<dbReference type="InterPro" id="IPR029048">
    <property type="entry name" value="HSP70_C_sf"/>
</dbReference>
<dbReference type="InterPro" id="IPR029047">
    <property type="entry name" value="HSP70_peptide-bd_sf"/>
</dbReference>
<dbReference type="InterPro" id="IPR013126">
    <property type="entry name" value="Hsp_70_fam"/>
</dbReference>
<dbReference type="NCBIfam" id="NF001413">
    <property type="entry name" value="PRK00290.1"/>
    <property type="match status" value="1"/>
</dbReference>
<dbReference type="NCBIfam" id="NF003520">
    <property type="entry name" value="PRK05183.1"/>
    <property type="match status" value="1"/>
</dbReference>
<dbReference type="NCBIfam" id="TIGR02350">
    <property type="entry name" value="prok_dnaK"/>
    <property type="match status" value="1"/>
</dbReference>
<dbReference type="PANTHER" id="PTHR19375">
    <property type="entry name" value="HEAT SHOCK PROTEIN 70KDA"/>
    <property type="match status" value="1"/>
</dbReference>
<dbReference type="Pfam" id="PF00012">
    <property type="entry name" value="HSP70"/>
    <property type="match status" value="1"/>
</dbReference>
<dbReference type="PRINTS" id="PR00301">
    <property type="entry name" value="HEATSHOCK70"/>
</dbReference>
<dbReference type="SUPFAM" id="SSF53067">
    <property type="entry name" value="Actin-like ATPase domain"/>
    <property type="match status" value="2"/>
</dbReference>
<dbReference type="SUPFAM" id="SSF100934">
    <property type="entry name" value="Heat shock protein 70kD (HSP70), C-terminal subdomain"/>
    <property type="match status" value="1"/>
</dbReference>
<dbReference type="SUPFAM" id="SSF100920">
    <property type="entry name" value="Heat shock protein 70kD (HSP70), peptide-binding domain"/>
    <property type="match status" value="1"/>
</dbReference>
<dbReference type="PROSITE" id="PS00297">
    <property type="entry name" value="HSP70_1"/>
    <property type="match status" value="1"/>
</dbReference>
<dbReference type="PROSITE" id="PS00329">
    <property type="entry name" value="HSP70_2"/>
    <property type="match status" value="1"/>
</dbReference>
<dbReference type="PROSITE" id="PS01036">
    <property type="entry name" value="HSP70_3"/>
    <property type="match status" value="1"/>
</dbReference>
<proteinExistence type="evidence at transcript level"/>
<reference key="1">
    <citation type="journal article" date="1995" name="J. Bacteriol.">
        <title>The dnaKJ operon of Agrobacterium tumefaciens: transcriptional analysis and evidence for a new heat shock promoter.</title>
        <authorList>
            <person name="Segal G."/>
            <person name="Ron E.Z."/>
        </authorList>
    </citation>
    <scope>NUCLEOTIDE SEQUENCE [GENOMIC DNA]</scope>
</reference>
<reference key="2">
    <citation type="journal article" date="2001" name="Science">
        <title>The genome of the natural genetic engineer Agrobacterium tumefaciens C58.</title>
        <authorList>
            <person name="Wood D.W."/>
            <person name="Setubal J.C."/>
            <person name="Kaul R."/>
            <person name="Monks D.E."/>
            <person name="Kitajima J.P."/>
            <person name="Okura V.K."/>
            <person name="Zhou Y."/>
            <person name="Chen L."/>
            <person name="Wood G.E."/>
            <person name="Almeida N.F. Jr."/>
            <person name="Woo L."/>
            <person name="Chen Y."/>
            <person name="Paulsen I.T."/>
            <person name="Eisen J.A."/>
            <person name="Karp P.D."/>
            <person name="Bovee D. Sr."/>
            <person name="Chapman P."/>
            <person name="Clendenning J."/>
            <person name="Deatherage G."/>
            <person name="Gillet W."/>
            <person name="Grant C."/>
            <person name="Kutyavin T."/>
            <person name="Levy R."/>
            <person name="Li M.-J."/>
            <person name="McClelland E."/>
            <person name="Palmieri A."/>
            <person name="Raymond C."/>
            <person name="Rouse G."/>
            <person name="Saenphimmachak C."/>
            <person name="Wu Z."/>
            <person name="Romero P."/>
            <person name="Gordon D."/>
            <person name="Zhang S."/>
            <person name="Yoo H."/>
            <person name="Tao Y."/>
            <person name="Biddle P."/>
            <person name="Jung M."/>
            <person name="Krespan W."/>
            <person name="Perry M."/>
            <person name="Gordon-Kamm B."/>
            <person name="Liao L."/>
            <person name="Kim S."/>
            <person name="Hendrick C."/>
            <person name="Zhao Z.-Y."/>
            <person name="Dolan M."/>
            <person name="Chumley F."/>
            <person name="Tingey S.V."/>
            <person name="Tomb J.-F."/>
            <person name="Gordon M.P."/>
            <person name="Olson M.V."/>
            <person name="Nester E.W."/>
        </authorList>
    </citation>
    <scope>NUCLEOTIDE SEQUENCE [LARGE SCALE GENOMIC DNA]</scope>
    <source>
        <strain>C58 / ATCC 33970</strain>
    </source>
</reference>
<reference key="3">
    <citation type="journal article" date="2001" name="Science">
        <title>Genome sequence of the plant pathogen and biotechnology agent Agrobacterium tumefaciens C58.</title>
        <authorList>
            <person name="Goodner B."/>
            <person name="Hinkle G."/>
            <person name="Gattung S."/>
            <person name="Miller N."/>
            <person name="Blanchard M."/>
            <person name="Qurollo B."/>
            <person name="Goldman B.S."/>
            <person name="Cao Y."/>
            <person name="Askenazi M."/>
            <person name="Halling C."/>
            <person name="Mullin L."/>
            <person name="Houmiel K."/>
            <person name="Gordon J."/>
            <person name="Vaudin M."/>
            <person name="Iartchouk O."/>
            <person name="Epp A."/>
            <person name="Liu F."/>
            <person name="Wollam C."/>
            <person name="Allinger M."/>
            <person name="Doughty D."/>
            <person name="Scott C."/>
            <person name="Lappas C."/>
            <person name="Markelz B."/>
            <person name="Flanagan C."/>
            <person name="Crowell C."/>
            <person name="Gurson J."/>
            <person name="Lomo C."/>
            <person name="Sear C."/>
            <person name="Strub G."/>
            <person name="Cielo C."/>
            <person name="Slater S."/>
        </authorList>
    </citation>
    <scope>NUCLEOTIDE SEQUENCE [LARGE SCALE GENOMIC DNA]</scope>
    <source>
        <strain>C58 / ATCC 33970</strain>
    </source>
</reference>
<keyword id="KW-0067">ATP-binding</keyword>
<keyword id="KW-0143">Chaperone</keyword>
<keyword id="KW-0547">Nucleotide-binding</keyword>
<keyword id="KW-0597">Phosphoprotein</keyword>
<keyword id="KW-1185">Reference proteome</keyword>
<keyword id="KW-0346">Stress response</keyword>
<evidence type="ECO:0000250" key="1"/>
<evidence type="ECO:0000256" key="2">
    <source>
        <dbReference type="SAM" id="MobiDB-lite"/>
    </source>
</evidence>
<evidence type="ECO:0000305" key="3"/>
<organism>
    <name type="scientific">Agrobacterium fabrum (strain C58 / ATCC 33970)</name>
    <name type="common">Agrobacterium tumefaciens (strain C58)</name>
    <dbReference type="NCBI Taxonomy" id="176299"/>
    <lineage>
        <taxon>Bacteria</taxon>
        <taxon>Pseudomonadati</taxon>
        <taxon>Pseudomonadota</taxon>
        <taxon>Alphaproteobacteria</taxon>
        <taxon>Hyphomicrobiales</taxon>
        <taxon>Rhizobiaceae</taxon>
        <taxon>Rhizobium/Agrobacterium group</taxon>
        <taxon>Agrobacterium</taxon>
        <taxon>Agrobacterium tumefaciens complex</taxon>
    </lineage>
</organism>
<comment type="function">
    <text evidence="1">Acts as a chaperone.</text>
</comment>
<comment type="induction">
    <text>By heat shock.</text>
</comment>
<comment type="similarity">
    <text evidence="3">Belongs to the heat shock protein 70 family.</text>
</comment>
<sequence length="633" mass="68080">MAKVIGIDLGTTNSCVAVMDGKDTKVIENAEGARTTPSMVAFSDDGERLVGQPAKRQAVTNPTNTLFAVKRLIGRRYEDPTVEKDKALVPFEIVKGDNGDAWVKAQDKNYSPSQISAMILQKMKETAESYLGEKVEKAVITVPAYFNDAQRQATKDAGRIAGLDVLRIINEPTAAALAYGLDKKEGKTIAVYDLGGGTFDISVLEIGDGVFEVKSTNGDTFLGGEDFDMRLVEYLAGEFKKDQGIDLKNDKLALQRLKEAAEKAKIELSSSQQTEINLPFITADASGPKHLTLKLTRAKFESLVDDLVQRTVAPCKAALKDAGVTAAEIDEVVLVGGMSRMPKVQEVVKQLFGKEPHKGVNPDEVVAMGAAIQAGVLQGDVKDVLLLDVTPLSLGIETLGGVFTRLIDRNTTIPTKKSQTFSTAEDNQSAVTIRVSQGEREMAQDNKLLGQFDLVGLPPSPRGVPQIEVTFDIDANGIVQVSAKDKGTGKEQQIRIQASGGLSDADIEKMVKDAEANAEADKKRRAGVEAKNQAESLIHSTEKSVKEYGDKVSETDRKAIEDAIASLKTAVEAAEPDADDIQAKTQTLMEVSMKLGQAIYEAQQAEAGDASAEGKDDVVDADYEEIKDDKKSA</sequence>
<feature type="chain" id="PRO_0000078405" description="Chaperone protein DnaK">
    <location>
        <begin position="1"/>
        <end position="633"/>
    </location>
</feature>
<feature type="region of interest" description="Disordered" evidence="2">
    <location>
        <begin position="605"/>
        <end position="633"/>
    </location>
</feature>
<feature type="modified residue" description="Phosphothreonine; by autocatalysis" evidence="1">
    <location>
        <position position="198"/>
    </location>
</feature>
<feature type="sequence conflict" description="In Ref. 1; CAA60592." evidence="3" ref="1">
    <original>L</original>
    <variation>P</variation>
    <location>
        <position position="293"/>
    </location>
</feature>
<feature type="sequence conflict" description="In Ref. 1; CAA60592." evidence="3" ref="1">
    <original>Q</original>
    <variation>R</variation>
    <location>
        <position position="345"/>
    </location>
</feature>
<feature type="sequence conflict" description="In Ref. 1; CAA60592." evidence="3" ref="1">
    <original>G</original>
    <variation>A</variation>
    <location>
        <position position="463"/>
    </location>
</feature>